<dbReference type="EMBL" id="U00016">
    <property type="protein sequence ID" value="AAA17167.1"/>
    <property type="molecule type" value="Genomic_DNA"/>
</dbReference>
<dbReference type="EMBL" id="AL583919">
    <property type="protein sequence ID" value="CAC30133.1"/>
    <property type="molecule type" value="Genomic_DNA"/>
</dbReference>
<dbReference type="PIR" id="S72599">
    <property type="entry name" value="S72599"/>
</dbReference>
<dbReference type="RefSeq" id="NP_301518.1">
    <property type="nucleotide sequence ID" value="NC_002677.1"/>
</dbReference>
<dbReference type="SMR" id="Q49762"/>
<dbReference type="STRING" id="272631.gene:17574446"/>
<dbReference type="KEGG" id="mle:ML0625"/>
<dbReference type="PATRIC" id="fig|272631.5.peg.1106"/>
<dbReference type="Leproma" id="ML0625"/>
<dbReference type="eggNOG" id="COG0484">
    <property type="taxonomic scope" value="Bacteria"/>
</dbReference>
<dbReference type="HOGENOM" id="CLU_017633_0_7_11"/>
<dbReference type="OrthoDB" id="9779889at2"/>
<dbReference type="Proteomes" id="UP000000806">
    <property type="component" value="Chromosome"/>
</dbReference>
<dbReference type="GO" id="GO:0005737">
    <property type="term" value="C:cytoplasm"/>
    <property type="evidence" value="ECO:0007669"/>
    <property type="project" value="UniProtKB-SubCell"/>
</dbReference>
<dbReference type="GO" id="GO:0005524">
    <property type="term" value="F:ATP binding"/>
    <property type="evidence" value="ECO:0007669"/>
    <property type="project" value="InterPro"/>
</dbReference>
<dbReference type="GO" id="GO:0031072">
    <property type="term" value="F:heat shock protein binding"/>
    <property type="evidence" value="ECO:0007669"/>
    <property type="project" value="InterPro"/>
</dbReference>
<dbReference type="GO" id="GO:0051082">
    <property type="term" value="F:unfolded protein binding"/>
    <property type="evidence" value="ECO:0007669"/>
    <property type="project" value="UniProtKB-UniRule"/>
</dbReference>
<dbReference type="GO" id="GO:0008270">
    <property type="term" value="F:zinc ion binding"/>
    <property type="evidence" value="ECO:0007669"/>
    <property type="project" value="UniProtKB-UniRule"/>
</dbReference>
<dbReference type="GO" id="GO:0051085">
    <property type="term" value="P:chaperone cofactor-dependent protein refolding"/>
    <property type="evidence" value="ECO:0007669"/>
    <property type="project" value="TreeGrafter"/>
</dbReference>
<dbReference type="GO" id="GO:0006260">
    <property type="term" value="P:DNA replication"/>
    <property type="evidence" value="ECO:0007669"/>
    <property type="project" value="UniProtKB-KW"/>
</dbReference>
<dbReference type="GO" id="GO:0042026">
    <property type="term" value="P:protein refolding"/>
    <property type="evidence" value="ECO:0007669"/>
    <property type="project" value="TreeGrafter"/>
</dbReference>
<dbReference type="GO" id="GO:0009408">
    <property type="term" value="P:response to heat"/>
    <property type="evidence" value="ECO:0007669"/>
    <property type="project" value="InterPro"/>
</dbReference>
<dbReference type="CDD" id="cd06257">
    <property type="entry name" value="DnaJ"/>
    <property type="match status" value="1"/>
</dbReference>
<dbReference type="CDD" id="cd10747">
    <property type="entry name" value="DnaJ_C"/>
    <property type="match status" value="1"/>
</dbReference>
<dbReference type="CDD" id="cd10719">
    <property type="entry name" value="DnaJ_zf"/>
    <property type="match status" value="1"/>
</dbReference>
<dbReference type="FunFam" id="2.60.260.20:FF:000005">
    <property type="entry name" value="Chaperone protein dnaJ 1, mitochondrial"/>
    <property type="match status" value="1"/>
</dbReference>
<dbReference type="FunFam" id="2.10.230.10:FF:000002">
    <property type="entry name" value="Molecular chaperone DnaJ"/>
    <property type="match status" value="1"/>
</dbReference>
<dbReference type="Gene3D" id="1.10.287.110">
    <property type="entry name" value="DnaJ domain"/>
    <property type="match status" value="1"/>
</dbReference>
<dbReference type="Gene3D" id="2.10.230.10">
    <property type="entry name" value="Heat shock protein DnaJ, cysteine-rich domain"/>
    <property type="match status" value="1"/>
</dbReference>
<dbReference type="Gene3D" id="2.60.260.20">
    <property type="entry name" value="Urease metallochaperone UreE, N-terminal domain"/>
    <property type="match status" value="2"/>
</dbReference>
<dbReference type="HAMAP" id="MF_01152">
    <property type="entry name" value="DnaJ"/>
    <property type="match status" value="1"/>
</dbReference>
<dbReference type="InterPro" id="IPR012724">
    <property type="entry name" value="DnaJ"/>
</dbReference>
<dbReference type="InterPro" id="IPR002939">
    <property type="entry name" value="DnaJ_C"/>
</dbReference>
<dbReference type="InterPro" id="IPR001623">
    <property type="entry name" value="DnaJ_domain"/>
</dbReference>
<dbReference type="InterPro" id="IPR008971">
    <property type="entry name" value="HSP40/DnaJ_pept-bd"/>
</dbReference>
<dbReference type="InterPro" id="IPR001305">
    <property type="entry name" value="HSP_DnaJ_Cys-rich_dom"/>
</dbReference>
<dbReference type="InterPro" id="IPR036410">
    <property type="entry name" value="HSP_DnaJ_Cys-rich_dom_sf"/>
</dbReference>
<dbReference type="InterPro" id="IPR036869">
    <property type="entry name" value="J_dom_sf"/>
</dbReference>
<dbReference type="NCBIfam" id="NF008035">
    <property type="entry name" value="PRK10767.1"/>
    <property type="match status" value="1"/>
</dbReference>
<dbReference type="NCBIfam" id="NF010871">
    <property type="entry name" value="PRK14278.1"/>
    <property type="match status" value="1"/>
</dbReference>
<dbReference type="PANTHER" id="PTHR43096:SF48">
    <property type="entry name" value="CHAPERONE PROTEIN DNAJ"/>
    <property type="match status" value="1"/>
</dbReference>
<dbReference type="PANTHER" id="PTHR43096">
    <property type="entry name" value="DNAJ HOMOLOG 1, MITOCHONDRIAL-RELATED"/>
    <property type="match status" value="1"/>
</dbReference>
<dbReference type="Pfam" id="PF00226">
    <property type="entry name" value="DnaJ"/>
    <property type="match status" value="1"/>
</dbReference>
<dbReference type="Pfam" id="PF01556">
    <property type="entry name" value="DnaJ_C"/>
    <property type="match status" value="1"/>
</dbReference>
<dbReference type="Pfam" id="PF00684">
    <property type="entry name" value="DnaJ_CXXCXGXG"/>
    <property type="match status" value="1"/>
</dbReference>
<dbReference type="PRINTS" id="PR00625">
    <property type="entry name" value="JDOMAIN"/>
</dbReference>
<dbReference type="SMART" id="SM00271">
    <property type="entry name" value="DnaJ"/>
    <property type="match status" value="1"/>
</dbReference>
<dbReference type="SUPFAM" id="SSF46565">
    <property type="entry name" value="Chaperone J-domain"/>
    <property type="match status" value="1"/>
</dbReference>
<dbReference type="SUPFAM" id="SSF57938">
    <property type="entry name" value="DnaJ/Hsp40 cysteine-rich domain"/>
    <property type="match status" value="1"/>
</dbReference>
<dbReference type="SUPFAM" id="SSF49493">
    <property type="entry name" value="HSP40/DnaJ peptide-binding domain"/>
    <property type="match status" value="2"/>
</dbReference>
<dbReference type="PROSITE" id="PS50076">
    <property type="entry name" value="DNAJ_2"/>
    <property type="match status" value="1"/>
</dbReference>
<dbReference type="PROSITE" id="PS51188">
    <property type="entry name" value="ZF_CR"/>
    <property type="match status" value="1"/>
</dbReference>
<feature type="chain" id="PRO_0000070827" description="Chaperone protein DnaJ 2">
    <location>
        <begin position="1"/>
        <end position="378"/>
    </location>
</feature>
<feature type="domain" description="J" evidence="1">
    <location>
        <begin position="4"/>
        <end position="68"/>
    </location>
</feature>
<feature type="repeat" description="CXXCXGXG motif">
    <location>
        <begin position="141"/>
        <end position="148"/>
    </location>
</feature>
<feature type="repeat" description="CXXCXGXG motif">
    <location>
        <begin position="158"/>
        <end position="165"/>
    </location>
</feature>
<feature type="repeat" description="CXXCXGXG motif">
    <location>
        <begin position="184"/>
        <end position="191"/>
    </location>
</feature>
<feature type="repeat" description="CXXCXGXG motif">
    <location>
        <begin position="198"/>
        <end position="205"/>
    </location>
</feature>
<feature type="zinc finger region" description="CR-type" evidence="1">
    <location>
        <begin position="128"/>
        <end position="210"/>
    </location>
</feature>
<feature type="binding site" evidence="1">
    <location>
        <position position="141"/>
    </location>
    <ligand>
        <name>Zn(2+)</name>
        <dbReference type="ChEBI" id="CHEBI:29105"/>
        <label>1</label>
    </ligand>
</feature>
<feature type="binding site" evidence="1">
    <location>
        <position position="144"/>
    </location>
    <ligand>
        <name>Zn(2+)</name>
        <dbReference type="ChEBI" id="CHEBI:29105"/>
        <label>1</label>
    </ligand>
</feature>
<feature type="binding site" evidence="1">
    <location>
        <position position="158"/>
    </location>
    <ligand>
        <name>Zn(2+)</name>
        <dbReference type="ChEBI" id="CHEBI:29105"/>
        <label>2</label>
    </ligand>
</feature>
<feature type="binding site" evidence="1">
    <location>
        <position position="161"/>
    </location>
    <ligand>
        <name>Zn(2+)</name>
        <dbReference type="ChEBI" id="CHEBI:29105"/>
        <label>2</label>
    </ligand>
</feature>
<feature type="binding site" evidence="1">
    <location>
        <position position="184"/>
    </location>
    <ligand>
        <name>Zn(2+)</name>
        <dbReference type="ChEBI" id="CHEBI:29105"/>
        <label>2</label>
    </ligand>
</feature>
<feature type="binding site" evidence="1">
    <location>
        <position position="187"/>
    </location>
    <ligand>
        <name>Zn(2+)</name>
        <dbReference type="ChEBI" id="CHEBI:29105"/>
        <label>2</label>
    </ligand>
</feature>
<feature type="binding site" evidence="1">
    <location>
        <position position="198"/>
    </location>
    <ligand>
        <name>Zn(2+)</name>
        <dbReference type="ChEBI" id="CHEBI:29105"/>
        <label>1</label>
    </ligand>
</feature>
<feature type="binding site" evidence="1">
    <location>
        <position position="201"/>
    </location>
    <ligand>
        <name>Zn(2+)</name>
        <dbReference type="ChEBI" id="CHEBI:29105"/>
        <label>1</label>
    </ligand>
</feature>
<comment type="function">
    <text evidence="1">Participates actively in the response to hyperosmotic and heat shock by preventing the aggregation of stress-denatured proteins and by disaggregating proteins, also in an autonomous, DnaK-independent fashion. Unfolded proteins bind initially to DnaJ; upon interaction with the DnaJ-bound protein, DnaK hydrolyzes its bound ATP, resulting in the formation of a stable complex. GrpE releases ADP from DnaK; ATP binding to DnaK triggers the release of the substrate protein, thus completing the reaction cycle. Several rounds of ATP-dependent interactions between DnaJ, DnaK and GrpE are required for fully efficient folding. Also involved, together with DnaK and GrpE, in the DNA replication of plasmids through activation of initiation proteins.</text>
</comment>
<comment type="cofactor">
    <cofactor evidence="1">
        <name>Zn(2+)</name>
        <dbReference type="ChEBI" id="CHEBI:29105"/>
    </cofactor>
    <text evidence="1">Binds 2 Zn(2+) ions per monomer.</text>
</comment>
<comment type="subunit">
    <text evidence="1">Homodimer.</text>
</comment>
<comment type="subcellular location">
    <subcellularLocation>
        <location evidence="1">Cytoplasm</location>
    </subcellularLocation>
</comment>
<comment type="domain">
    <text evidence="1">The J domain is necessary and sufficient to stimulate DnaK ATPase activity. Zinc center 1 plays an important role in the autonomous, DnaK-independent chaperone activity of DnaJ. Zinc center 2 is essential for interaction with DnaK and for DnaJ activity.</text>
</comment>
<comment type="similarity">
    <text evidence="1">Belongs to the DnaJ family.</text>
</comment>
<proteinExistence type="inferred from homology"/>
<evidence type="ECO:0000255" key="1">
    <source>
        <dbReference type="HAMAP-Rule" id="MF_01152"/>
    </source>
</evidence>
<gene>
    <name evidence="1" type="primary">dnaJ2</name>
    <name type="ordered locus">ML0625</name>
    <name type="ORF">B1937_F2_56</name>
</gene>
<reference key="1">
    <citation type="submission" date="1994-03" db="EMBL/GenBank/DDBJ databases">
        <authorList>
            <person name="Smith D.R."/>
            <person name="Robison K."/>
        </authorList>
    </citation>
    <scope>NUCLEOTIDE SEQUENCE [GENOMIC DNA]</scope>
</reference>
<reference key="2">
    <citation type="journal article" date="2001" name="Nature">
        <title>Massive gene decay in the leprosy bacillus.</title>
        <authorList>
            <person name="Cole S.T."/>
            <person name="Eiglmeier K."/>
            <person name="Parkhill J."/>
            <person name="James K.D."/>
            <person name="Thomson N.R."/>
            <person name="Wheeler P.R."/>
            <person name="Honore N."/>
            <person name="Garnier T."/>
            <person name="Churcher C.M."/>
            <person name="Harris D.E."/>
            <person name="Mungall K.L."/>
            <person name="Basham D."/>
            <person name="Brown D."/>
            <person name="Chillingworth T."/>
            <person name="Connor R."/>
            <person name="Davies R.M."/>
            <person name="Devlin K."/>
            <person name="Duthoy S."/>
            <person name="Feltwell T."/>
            <person name="Fraser A."/>
            <person name="Hamlin N."/>
            <person name="Holroyd S."/>
            <person name="Hornsby T."/>
            <person name="Jagels K."/>
            <person name="Lacroix C."/>
            <person name="Maclean J."/>
            <person name="Moule S."/>
            <person name="Murphy L.D."/>
            <person name="Oliver K."/>
            <person name="Quail M.A."/>
            <person name="Rajandream M.A."/>
            <person name="Rutherford K.M."/>
            <person name="Rutter S."/>
            <person name="Seeger K."/>
            <person name="Simon S."/>
            <person name="Simmonds M."/>
            <person name="Skelton J."/>
            <person name="Squares R."/>
            <person name="Squares S."/>
            <person name="Stevens K."/>
            <person name="Taylor K."/>
            <person name="Whitehead S."/>
            <person name="Woodward J.R."/>
            <person name="Barrell B.G."/>
        </authorList>
    </citation>
    <scope>NUCLEOTIDE SEQUENCE [LARGE SCALE GENOMIC DNA]</scope>
    <source>
        <strain>TN</strain>
    </source>
</reference>
<sequence>MARDYYGLLGVSRNASDADIKRAYRKLARELHPDINPDEAAQAKFKEISMAYEVLSDPEKRRIVDLGGDPMENAAASPSGFGGFGGLGDVFEAFFGGSSASRGPIGRVRPGSDSLLPMWLDLEECATGVTKQVTVDTAVLCDRCQGKGTNGDSAPIPCDTCGGRGEVQTVQRSLLGQMVTARPCPTCRGVGVVIPDPCCQCVGDGRVRARREITVKIPSGVGDGMRVRLAAQGEVGPGGGPAGDLYVEVHEQAHDIFVRDGDDLHCTVSVPMVDAALGTTITVDAILDGMSEIDISPGTQPGSVIELRGQGMPHLRSNTRGNLHVHVEVMVPTRLDQHDTELLRELKRRRSRDVAEVRSTHAAGGGLFSRLRETFTNR</sequence>
<organism>
    <name type="scientific">Mycobacterium leprae (strain TN)</name>
    <dbReference type="NCBI Taxonomy" id="272631"/>
    <lineage>
        <taxon>Bacteria</taxon>
        <taxon>Bacillati</taxon>
        <taxon>Actinomycetota</taxon>
        <taxon>Actinomycetes</taxon>
        <taxon>Mycobacteriales</taxon>
        <taxon>Mycobacteriaceae</taxon>
        <taxon>Mycobacterium</taxon>
    </lineage>
</organism>
<name>DNAJ2_MYCLE</name>
<accession>Q49762</accession>
<keyword id="KW-0143">Chaperone</keyword>
<keyword id="KW-0963">Cytoplasm</keyword>
<keyword id="KW-0235">DNA replication</keyword>
<keyword id="KW-0479">Metal-binding</keyword>
<keyword id="KW-1185">Reference proteome</keyword>
<keyword id="KW-0677">Repeat</keyword>
<keyword id="KW-0346">Stress response</keyword>
<keyword id="KW-0862">Zinc</keyword>
<keyword id="KW-0863">Zinc-finger</keyword>
<protein>
    <recommendedName>
        <fullName evidence="1">Chaperone protein DnaJ 2</fullName>
    </recommendedName>
</protein>